<gene>
    <name evidence="1" type="primary">gatB</name>
    <name type="ordered locus">CV_4354</name>
</gene>
<sequence>MKWEVVIGIEVHVQLNTASKIFSGASTAFGAEPNTQASAVELALPGVLPVLNRAVVDKAIRLGLALDANINQKNVFARKNYFYPDLPKGYQISQMDLPIVEHGKLKILVGDQEKVIGVTRAHMEEDAGKSLHEDFQGLSGIDLNRAGTPLLEVVSEPDMRSVDEALAYVKALYTLVTWLGICDGNMQEGSFRMDVNVSVRPEGQKEFGTRREIKNLNSFRFLEQAAKYEIQWQIDTLEDGGKVQQATVLFDPDTGETRMMRSKEDAHDYRYFPDPDLLPVRISDEQVARIKGEMPELPGAMQARFVDAYGVSAYDAALLTSSLAQAQYFEAVAKASGQGKLAANWINGEIAARLNRDGKDILDCPISAERLSGLIARIADNTLSSKLAKQVFDALWDSELSADAIIERDGLKQVSDVGAIEKMVEEAIAANPKAVEEFRAGKEKALNALAGQVMKASKGKANPAQVQDILRQKLS</sequence>
<organism>
    <name type="scientific">Chromobacterium violaceum (strain ATCC 12472 / DSM 30191 / JCM 1249 / CCUG 213 / NBRC 12614 / NCIMB 9131 / NCTC 9757 / MK)</name>
    <dbReference type="NCBI Taxonomy" id="243365"/>
    <lineage>
        <taxon>Bacteria</taxon>
        <taxon>Pseudomonadati</taxon>
        <taxon>Pseudomonadota</taxon>
        <taxon>Betaproteobacteria</taxon>
        <taxon>Neisseriales</taxon>
        <taxon>Chromobacteriaceae</taxon>
        <taxon>Chromobacterium</taxon>
    </lineage>
</organism>
<reference key="1">
    <citation type="journal article" date="2003" name="Proc. Natl. Acad. Sci. U.S.A.">
        <title>The complete genome sequence of Chromobacterium violaceum reveals remarkable and exploitable bacterial adaptability.</title>
        <authorList>
            <person name="Vasconcelos A.T.R."/>
            <person name="de Almeida D.F."/>
            <person name="Hungria M."/>
            <person name="Guimaraes C.T."/>
            <person name="Antonio R.V."/>
            <person name="Almeida F.C."/>
            <person name="de Almeida L.G.P."/>
            <person name="de Almeida R."/>
            <person name="Alves-Gomes J.A."/>
            <person name="Andrade E.M."/>
            <person name="Araripe J."/>
            <person name="de Araujo M.F.F."/>
            <person name="Astolfi-Filho S."/>
            <person name="Azevedo V."/>
            <person name="Baptista A.J."/>
            <person name="Bataus L.A.M."/>
            <person name="Batista J.S."/>
            <person name="Belo A."/>
            <person name="van den Berg C."/>
            <person name="Bogo M."/>
            <person name="Bonatto S."/>
            <person name="Bordignon J."/>
            <person name="Brigido M.M."/>
            <person name="Brito C.A."/>
            <person name="Brocchi M."/>
            <person name="Burity H.A."/>
            <person name="Camargo A.A."/>
            <person name="Cardoso D.D.P."/>
            <person name="Carneiro N.P."/>
            <person name="Carraro D.M."/>
            <person name="Carvalho C.M.B."/>
            <person name="Cascardo J.C.M."/>
            <person name="Cavada B.S."/>
            <person name="Chueire L.M.O."/>
            <person name="Creczynski-Pasa T.B."/>
            <person name="Cunha-Junior N.C."/>
            <person name="Fagundes N."/>
            <person name="Falcao C.L."/>
            <person name="Fantinatti F."/>
            <person name="Farias I.P."/>
            <person name="Felipe M.S.S."/>
            <person name="Ferrari L.P."/>
            <person name="Ferro J.A."/>
            <person name="Ferro M.I.T."/>
            <person name="Franco G.R."/>
            <person name="Freitas N.S.A."/>
            <person name="Furlan L.R."/>
            <person name="Gazzinelli R.T."/>
            <person name="Gomes E.A."/>
            <person name="Goncalves P.R."/>
            <person name="Grangeiro T.B."/>
            <person name="Grattapaglia D."/>
            <person name="Grisard E.C."/>
            <person name="Hanna E.S."/>
            <person name="Jardim S.N."/>
            <person name="Laurino J."/>
            <person name="Leoi L.C.T."/>
            <person name="Lima L.F.A."/>
            <person name="Loureiro M.F."/>
            <person name="Lyra M.C.C.P."/>
            <person name="Madeira H.M.F."/>
            <person name="Manfio G.P."/>
            <person name="Maranhao A.Q."/>
            <person name="Martins W.S."/>
            <person name="di Mauro S.M.Z."/>
            <person name="de Medeiros S.R.B."/>
            <person name="Meissner R.V."/>
            <person name="Moreira M.A.M."/>
            <person name="Nascimento F.F."/>
            <person name="Nicolas M.F."/>
            <person name="Oliveira J.G."/>
            <person name="Oliveira S.C."/>
            <person name="Paixao R.F.C."/>
            <person name="Parente J.A."/>
            <person name="Pedrosa F.O."/>
            <person name="Pena S.D.J."/>
            <person name="Pereira J.O."/>
            <person name="Pereira M."/>
            <person name="Pinto L.S.R.C."/>
            <person name="Pinto L.S."/>
            <person name="Porto J.I.R."/>
            <person name="Potrich D.P."/>
            <person name="Ramalho-Neto C.E."/>
            <person name="Reis A.M.M."/>
            <person name="Rigo L.U."/>
            <person name="Rondinelli E."/>
            <person name="Santos E.B.P."/>
            <person name="Santos F.R."/>
            <person name="Schneider M.P.C."/>
            <person name="Seuanez H.N."/>
            <person name="Silva A.M.R."/>
            <person name="da Silva A.L.C."/>
            <person name="Silva D.W."/>
            <person name="Silva R."/>
            <person name="Simoes I.C."/>
            <person name="Simon D."/>
            <person name="Soares C.M.A."/>
            <person name="Soares R.B.A."/>
            <person name="Souza E.M."/>
            <person name="Souza K.R.L."/>
            <person name="Souza R.C."/>
            <person name="Steffens M.B.R."/>
            <person name="Steindel M."/>
            <person name="Teixeira S.R."/>
            <person name="Urmenyi T."/>
            <person name="Vettore A."/>
            <person name="Wassem R."/>
            <person name="Zaha A."/>
            <person name="Simpson A.J.G."/>
        </authorList>
    </citation>
    <scope>NUCLEOTIDE SEQUENCE [LARGE SCALE GENOMIC DNA]</scope>
    <source>
        <strain>ATCC 12472 / DSM 30191 / JCM 1249 / CCUG 213 / NBRC 12614 / NCIMB 9131 / NCTC 9757 / MK</strain>
    </source>
</reference>
<name>GATB_CHRVO</name>
<keyword id="KW-0067">ATP-binding</keyword>
<keyword id="KW-0436">Ligase</keyword>
<keyword id="KW-0547">Nucleotide-binding</keyword>
<keyword id="KW-0648">Protein biosynthesis</keyword>
<keyword id="KW-1185">Reference proteome</keyword>
<protein>
    <recommendedName>
        <fullName evidence="1">Aspartyl/glutamyl-tRNA(Asn/Gln) amidotransferase subunit B</fullName>
        <shortName evidence="1">Asp/Glu-ADT subunit B</shortName>
        <ecNumber evidence="1">6.3.5.-</ecNumber>
    </recommendedName>
</protein>
<dbReference type="EC" id="6.3.5.-" evidence="1"/>
<dbReference type="EMBL" id="AE016825">
    <property type="protein sequence ID" value="AAQ62013.1"/>
    <property type="molecule type" value="Genomic_DNA"/>
</dbReference>
<dbReference type="RefSeq" id="WP_011137900.1">
    <property type="nucleotide sequence ID" value="NC_005085.1"/>
</dbReference>
<dbReference type="SMR" id="Q7NPY8"/>
<dbReference type="STRING" id="243365.CV_4354"/>
<dbReference type="KEGG" id="cvi:CV_4354"/>
<dbReference type="eggNOG" id="COG0064">
    <property type="taxonomic scope" value="Bacteria"/>
</dbReference>
<dbReference type="HOGENOM" id="CLU_019240_0_0_4"/>
<dbReference type="OrthoDB" id="9804078at2"/>
<dbReference type="Proteomes" id="UP000001424">
    <property type="component" value="Chromosome"/>
</dbReference>
<dbReference type="GO" id="GO:0050566">
    <property type="term" value="F:asparaginyl-tRNA synthase (glutamine-hydrolyzing) activity"/>
    <property type="evidence" value="ECO:0007669"/>
    <property type="project" value="RHEA"/>
</dbReference>
<dbReference type="GO" id="GO:0005524">
    <property type="term" value="F:ATP binding"/>
    <property type="evidence" value="ECO:0007669"/>
    <property type="project" value="UniProtKB-KW"/>
</dbReference>
<dbReference type="GO" id="GO:0050567">
    <property type="term" value="F:glutaminyl-tRNA synthase (glutamine-hydrolyzing) activity"/>
    <property type="evidence" value="ECO:0007669"/>
    <property type="project" value="UniProtKB-UniRule"/>
</dbReference>
<dbReference type="GO" id="GO:0070681">
    <property type="term" value="P:glutaminyl-tRNAGln biosynthesis via transamidation"/>
    <property type="evidence" value="ECO:0007669"/>
    <property type="project" value="TreeGrafter"/>
</dbReference>
<dbReference type="GO" id="GO:0006412">
    <property type="term" value="P:translation"/>
    <property type="evidence" value="ECO:0007669"/>
    <property type="project" value="UniProtKB-UniRule"/>
</dbReference>
<dbReference type="FunFam" id="1.10.10.410:FF:000001">
    <property type="entry name" value="Aspartyl/glutamyl-tRNA(Asn/Gln) amidotransferase subunit B"/>
    <property type="match status" value="1"/>
</dbReference>
<dbReference type="FunFam" id="1.10.150.380:FF:000001">
    <property type="entry name" value="Aspartyl/glutamyl-tRNA(Asn/Gln) amidotransferase subunit B"/>
    <property type="match status" value="1"/>
</dbReference>
<dbReference type="Gene3D" id="1.10.10.410">
    <property type="match status" value="1"/>
</dbReference>
<dbReference type="Gene3D" id="1.10.150.380">
    <property type="entry name" value="GatB domain, N-terminal subdomain"/>
    <property type="match status" value="1"/>
</dbReference>
<dbReference type="HAMAP" id="MF_00121">
    <property type="entry name" value="GatB"/>
    <property type="match status" value="1"/>
</dbReference>
<dbReference type="InterPro" id="IPR017959">
    <property type="entry name" value="Asn/Gln-tRNA_amidoTrfase_suB/E"/>
</dbReference>
<dbReference type="InterPro" id="IPR006075">
    <property type="entry name" value="Asn/Gln-tRNA_Trfase_suB/E_cat"/>
</dbReference>
<dbReference type="InterPro" id="IPR018027">
    <property type="entry name" value="Asn/Gln_amidotransferase"/>
</dbReference>
<dbReference type="InterPro" id="IPR003789">
    <property type="entry name" value="Asn/Gln_tRNA_amidoTrase-B-like"/>
</dbReference>
<dbReference type="InterPro" id="IPR004413">
    <property type="entry name" value="GatB"/>
</dbReference>
<dbReference type="InterPro" id="IPR042114">
    <property type="entry name" value="GatB_C_1"/>
</dbReference>
<dbReference type="InterPro" id="IPR023168">
    <property type="entry name" value="GatB_Yqey_C_2"/>
</dbReference>
<dbReference type="InterPro" id="IPR017958">
    <property type="entry name" value="Gln-tRNA_amidoTrfase_suB_CS"/>
</dbReference>
<dbReference type="InterPro" id="IPR014746">
    <property type="entry name" value="Gln_synth/guanido_kin_cat_dom"/>
</dbReference>
<dbReference type="NCBIfam" id="TIGR00133">
    <property type="entry name" value="gatB"/>
    <property type="match status" value="1"/>
</dbReference>
<dbReference type="NCBIfam" id="NF004012">
    <property type="entry name" value="PRK05477.1-2"/>
    <property type="match status" value="1"/>
</dbReference>
<dbReference type="NCBIfam" id="NF004014">
    <property type="entry name" value="PRK05477.1-4"/>
    <property type="match status" value="1"/>
</dbReference>
<dbReference type="NCBIfam" id="NF004015">
    <property type="entry name" value="PRK05477.1-5"/>
    <property type="match status" value="1"/>
</dbReference>
<dbReference type="PANTHER" id="PTHR11659">
    <property type="entry name" value="GLUTAMYL-TRNA GLN AMIDOTRANSFERASE SUBUNIT B MITOCHONDRIAL AND PROKARYOTIC PET112-RELATED"/>
    <property type="match status" value="1"/>
</dbReference>
<dbReference type="PANTHER" id="PTHR11659:SF0">
    <property type="entry name" value="GLUTAMYL-TRNA(GLN) AMIDOTRANSFERASE SUBUNIT B, MITOCHONDRIAL"/>
    <property type="match status" value="1"/>
</dbReference>
<dbReference type="Pfam" id="PF02934">
    <property type="entry name" value="GatB_N"/>
    <property type="match status" value="1"/>
</dbReference>
<dbReference type="Pfam" id="PF02637">
    <property type="entry name" value="GatB_Yqey"/>
    <property type="match status" value="1"/>
</dbReference>
<dbReference type="SMART" id="SM00845">
    <property type="entry name" value="GatB_Yqey"/>
    <property type="match status" value="1"/>
</dbReference>
<dbReference type="SUPFAM" id="SSF89095">
    <property type="entry name" value="GatB/YqeY motif"/>
    <property type="match status" value="1"/>
</dbReference>
<dbReference type="SUPFAM" id="SSF55931">
    <property type="entry name" value="Glutamine synthetase/guanido kinase"/>
    <property type="match status" value="1"/>
</dbReference>
<dbReference type="PROSITE" id="PS01234">
    <property type="entry name" value="GATB"/>
    <property type="match status" value="1"/>
</dbReference>
<proteinExistence type="inferred from homology"/>
<accession>Q7NPY8</accession>
<evidence type="ECO:0000255" key="1">
    <source>
        <dbReference type="HAMAP-Rule" id="MF_00121"/>
    </source>
</evidence>
<comment type="function">
    <text evidence="1">Allows the formation of correctly charged Asn-tRNA(Asn) or Gln-tRNA(Gln) through the transamidation of misacylated Asp-tRNA(Asn) or Glu-tRNA(Gln) in organisms which lack either or both of asparaginyl-tRNA or glutaminyl-tRNA synthetases. The reaction takes place in the presence of glutamine and ATP through an activated phospho-Asp-tRNA(Asn) or phospho-Glu-tRNA(Gln).</text>
</comment>
<comment type="catalytic activity">
    <reaction evidence="1">
        <text>L-glutamyl-tRNA(Gln) + L-glutamine + ATP + H2O = L-glutaminyl-tRNA(Gln) + L-glutamate + ADP + phosphate + H(+)</text>
        <dbReference type="Rhea" id="RHEA:17521"/>
        <dbReference type="Rhea" id="RHEA-COMP:9681"/>
        <dbReference type="Rhea" id="RHEA-COMP:9684"/>
        <dbReference type="ChEBI" id="CHEBI:15377"/>
        <dbReference type="ChEBI" id="CHEBI:15378"/>
        <dbReference type="ChEBI" id="CHEBI:29985"/>
        <dbReference type="ChEBI" id="CHEBI:30616"/>
        <dbReference type="ChEBI" id="CHEBI:43474"/>
        <dbReference type="ChEBI" id="CHEBI:58359"/>
        <dbReference type="ChEBI" id="CHEBI:78520"/>
        <dbReference type="ChEBI" id="CHEBI:78521"/>
        <dbReference type="ChEBI" id="CHEBI:456216"/>
    </reaction>
</comment>
<comment type="catalytic activity">
    <reaction evidence="1">
        <text>L-aspartyl-tRNA(Asn) + L-glutamine + ATP + H2O = L-asparaginyl-tRNA(Asn) + L-glutamate + ADP + phosphate + 2 H(+)</text>
        <dbReference type="Rhea" id="RHEA:14513"/>
        <dbReference type="Rhea" id="RHEA-COMP:9674"/>
        <dbReference type="Rhea" id="RHEA-COMP:9677"/>
        <dbReference type="ChEBI" id="CHEBI:15377"/>
        <dbReference type="ChEBI" id="CHEBI:15378"/>
        <dbReference type="ChEBI" id="CHEBI:29985"/>
        <dbReference type="ChEBI" id="CHEBI:30616"/>
        <dbReference type="ChEBI" id="CHEBI:43474"/>
        <dbReference type="ChEBI" id="CHEBI:58359"/>
        <dbReference type="ChEBI" id="CHEBI:78515"/>
        <dbReference type="ChEBI" id="CHEBI:78516"/>
        <dbReference type="ChEBI" id="CHEBI:456216"/>
    </reaction>
</comment>
<comment type="subunit">
    <text evidence="1">Heterotrimer of A, B and C subunits.</text>
</comment>
<comment type="similarity">
    <text evidence="1">Belongs to the GatB/GatE family. GatB subfamily.</text>
</comment>
<feature type="chain" id="PRO_0000148780" description="Aspartyl/glutamyl-tRNA(Asn/Gln) amidotransferase subunit B">
    <location>
        <begin position="1"/>
        <end position="475"/>
    </location>
</feature>